<proteinExistence type="evidence at transcript level"/>
<reference key="1">
    <citation type="journal article" date="2005" name="BMC Biol.">
        <title>The sequence of rice chromosomes 11 and 12, rich in disease resistance genes and recent gene duplications.</title>
        <authorList>
            <consortium name="The rice chromosomes 11 and 12 sequencing consortia"/>
        </authorList>
    </citation>
    <scope>NUCLEOTIDE SEQUENCE [LARGE SCALE GENOMIC DNA]</scope>
    <source>
        <strain>cv. Nipponbare</strain>
    </source>
</reference>
<reference key="2">
    <citation type="journal article" date="2005" name="Nature">
        <title>The map-based sequence of the rice genome.</title>
        <authorList>
            <consortium name="International rice genome sequencing project (IRGSP)"/>
        </authorList>
    </citation>
    <scope>NUCLEOTIDE SEQUENCE [LARGE SCALE GENOMIC DNA]</scope>
    <source>
        <strain>cv. Nipponbare</strain>
    </source>
</reference>
<reference key="3">
    <citation type="journal article" date="2008" name="Nucleic Acids Res.">
        <title>The rice annotation project database (RAP-DB): 2008 update.</title>
        <authorList>
            <consortium name="The rice annotation project (RAP)"/>
        </authorList>
    </citation>
    <scope>GENOME REANNOTATION</scope>
    <source>
        <strain>cv. Nipponbare</strain>
    </source>
</reference>
<reference key="4">
    <citation type="journal article" date="2013" name="Rice">
        <title>Improvement of the Oryza sativa Nipponbare reference genome using next generation sequence and optical map data.</title>
        <authorList>
            <person name="Kawahara Y."/>
            <person name="de la Bastide M."/>
            <person name="Hamilton J.P."/>
            <person name="Kanamori H."/>
            <person name="McCombie W.R."/>
            <person name="Ouyang S."/>
            <person name="Schwartz D.C."/>
            <person name="Tanaka T."/>
            <person name="Wu J."/>
            <person name="Zhou S."/>
            <person name="Childs K.L."/>
            <person name="Davidson R.M."/>
            <person name="Lin H."/>
            <person name="Quesada-Ocampo L."/>
            <person name="Vaillancourt B."/>
            <person name="Sakai H."/>
            <person name="Lee S.S."/>
            <person name="Kim J."/>
            <person name="Numa H."/>
            <person name="Itoh T."/>
            <person name="Buell C.R."/>
            <person name="Matsumoto T."/>
        </authorList>
    </citation>
    <scope>GENOME REANNOTATION</scope>
    <source>
        <strain>cv. Nipponbare</strain>
    </source>
</reference>
<reference key="5">
    <citation type="journal article" date="2003" name="Science">
        <title>Collection, mapping, and annotation of over 28,000 cDNA clones from japonica rice.</title>
        <authorList>
            <consortium name="The rice full-length cDNA consortium"/>
        </authorList>
    </citation>
    <scope>NUCLEOTIDE SEQUENCE [LARGE SCALE MRNA]</scope>
    <source>
        <strain>cv. Nipponbare</strain>
    </source>
</reference>
<dbReference type="EC" id="2.7.1.23"/>
<dbReference type="EMBL" id="AC134046">
    <property type="protein sequence ID" value="AAX95220.1"/>
    <property type="molecule type" value="Genomic_DNA"/>
</dbReference>
<dbReference type="EMBL" id="DP000010">
    <property type="protein sequence ID" value="ABA91849.1"/>
    <property type="molecule type" value="Genomic_DNA"/>
</dbReference>
<dbReference type="EMBL" id="AP008217">
    <property type="protein sequence ID" value="BAF27778.1"/>
    <property type="molecule type" value="Genomic_DNA"/>
</dbReference>
<dbReference type="EMBL" id="AP014967">
    <property type="protein sequence ID" value="BAT13017.1"/>
    <property type="molecule type" value="Genomic_DNA"/>
</dbReference>
<dbReference type="EMBL" id="AK065215">
    <property type="status" value="NOT_ANNOTATED_CDS"/>
    <property type="molecule type" value="mRNA"/>
</dbReference>
<dbReference type="RefSeq" id="XP_015616979.1">
    <property type="nucleotide sequence ID" value="XM_015761493.1"/>
</dbReference>
<dbReference type="SMR" id="Q53NI2"/>
<dbReference type="FunCoup" id="Q53NI2">
    <property type="interactions" value="1856"/>
</dbReference>
<dbReference type="STRING" id="39947.Q53NI2"/>
<dbReference type="PaxDb" id="39947-Q53NI2"/>
<dbReference type="EnsemblPlants" id="Os11t0191400-01">
    <property type="protein sequence ID" value="Os11t0191400-01"/>
    <property type="gene ID" value="Os11g0191400"/>
</dbReference>
<dbReference type="Gramene" id="Os11t0191400-01">
    <property type="protein sequence ID" value="Os11t0191400-01"/>
    <property type="gene ID" value="Os11g0191400"/>
</dbReference>
<dbReference type="KEGG" id="dosa:Os11g0191400"/>
<dbReference type="eggNOG" id="KOG2178">
    <property type="taxonomic scope" value="Eukaryota"/>
</dbReference>
<dbReference type="InParanoid" id="Q53NI2"/>
<dbReference type="OMA" id="SEGEMNY"/>
<dbReference type="OrthoDB" id="24581at2759"/>
<dbReference type="Proteomes" id="UP000000763">
    <property type="component" value="Chromosome 11"/>
</dbReference>
<dbReference type="Proteomes" id="UP000059680">
    <property type="component" value="Chromosome 11"/>
</dbReference>
<dbReference type="ExpressionAtlas" id="Q53NI2">
    <property type="expression patterns" value="baseline and differential"/>
</dbReference>
<dbReference type="GO" id="GO:0009507">
    <property type="term" value="C:chloroplast"/>
    <property type="evidence" value="ECO:0007669"/>
    <property type="project" value="UniProtKB-SubCell"/>
</dbReference>
<dbReference type="GO" id="GO:0005524">
    <property type="term" value="F:ATP binding"/>
    <property type="evidence" value="ECO:0007669"/>
    <property type="project" value="UniProtKB-KW"/>
</dbReference>
<dbReference type="GO" id="GO:0005516">
    <property type="term" value="F:calmodulin binding"/>
    <property type="evidence" value="ECO:0007669"/>
    <property type="project" value="UniProtKB-KW"/>
</dbReference>
<dbReference type="GO" id="GO:0003951">
    <property type="term" value="F:NAD+ kinase activity"/>
    <property type="evidence" value="ECO:0000318"/>
    <property type="project" value="GO_Central"/>
</dbReference>
<dbReference type="GO" id="GO:0019674">
    <property type="term" value="P:NAD metabolic process"/>
    <property type="evidence" value="ECO:0007669"/>
    <property type="project" value="InterPro"/>
</dbReference>
<dbReference type="GO" id="GO:0006741">
    <property type="term" value="P:NADP biosynthetic process"/>
    <property type="evidence" value="ECO:0000318"/>
    <property type="project" value="GO_Central"/>
</dbReference>
<dbReference type="FunFam" id="3.90.190.10:FF:000085">
    <property type="entry name" value="NAD kinase 2 chloroplastic"/>
    <property type="match status" value="1"/>
</dbReference>
<dbReference type="FunFam" id="2.60.200.30:FF:000004">
    <property type="entry name" value="NAD kinase 2, chloroplastic"/>
    <property type="match status" value="1"/>
</dbReference>
<dbReference type="FunFam" id="3.40.50.10330:FF:000019">
    <property type="entry name" value="NAD kinase 2, chloroplastic"/>
    <property type="match status" value="1"/>
</dbReference>
<dbReference type="Gene3D" id="3.40.50.10330">
    <property type="entry name" value="Probable inorganic polyphosphate/atp-NAD kinase, domain 1"/>
    <property type="match status" value="1"/>
</dbReference>
<dbReference type="Gene3D" id="2.60.200.30">
    <property type="entry name" value="Probable inorganic polyphosphate/atp-NAD kinase, domain 2"/>
    <property type="match status" value="1"/>
</dbReference>
<dbReference type="Gene3D" id="3.90.190.10">
    <property type="entry name" value="Protein tyrosine phosphatase superfamily"/>
    <property type="match status" value="1"/>
</dbReference>
<dbReference type="HAMAP" id="MF_00361">
    <property type="entry name" value="NAD_kinase"/>
    <property type="match status" value="1"/>
</dbReference>
<dbReference type="InterPro" id="IPR017438">
    <property type="entry name" value="ATP-NAD_kinase_N"/>
</dbReference>
<dbReference type="InterPro" id="IPR017437">
    <property type="entry name" value="ATP-NAD_kinase_PpnK-typ_C"/>
</dbReference>
<dbReference type="InterPro" id="IPR016064">
    <property type="entry name" value="NAD/diacylglycerol_kinase_sf"/>
</dbReference>
<dbReference type="InterPro" id="IPR002504">
    <property type="entry name" value="NADK"/>
</dbReference>
<dbReference type="InterPro" id="IPR029021">
    <property type="entry name" value="Prot-tyrosine_phosphatase-like"/>
</dbReference>
<dbReference type="InterPro" id="IPR055214">
    <property type="entry name" value="PTP-NADK"/>
</dbReference>
<dbReference type="PANTHER" id="PTHR20275">
    <property type="entry name" value="NAD KINASE"/>
    <property type="match status" value="1"/>
</dbReference>
<dbReference type="PANTHER" id="PTHR20275:SF6">
    <property type="entry name" value="NAD KINASE 2, CHLOROPLASTIC"/>
    <property type="match status" value="1"/>
</dbReference>
<dbReference type="Pfam" id="PF01513">
    <property type="entry name" value="NAD_kinase"/>
    <property type="match status" value="1"/>
</dbReference>
<dbReference type="Pfam" id="PF20143">
    <property type="entry name" value="NAD_kinase_C"/>
    <property type="match status" value="1"/>
</dbReference>
<dbReference type="Pfam" id="PF22741">
    <property type="entry name" value="PTP-NADK"/>
    <property type="match status" value="1"/>
</dbReference>
<dbReference type="SUPFAM" id="SSF52799">
    <property type="entry name" value="(Phosphotyrosine protein) phosphatases II"/>
    <property type="match status" value="1"/>
</dbReference>
<dbReference type="SUPFAM" id="SSF111331">
    <property type="entry name" value="NAD kinase/diacylglycerol kinase-like"/>
    <property type="match status" value="1"/>
</dbReference>
<sequence length="981" mass="108613">MLAVCARHGPAKLPPPPPPLAGERAAAWVVGRWWWRPAAAGRRGVVAARASFFSSRIGLDSQNYHTRDLSQLLWVGPVPGDIAEIEAYCRIFRAAEQLHTAVMSALCDPETGECPVRYDVQTEDLPVLEDKVAAVLGCMLALLNRGRKEVLSGRSGVASAFQGSEDSTMDKIPPLALFRGDLKRCCESMQVALASYLVPSEARGLDIWRKLQRLKNACYDAGFPRADGHPCPTLFANWFPVYFSTVPDDSLSDELEVAFWRGGQVSEEGLEWLLLKGFKTIVDLREEDVKDDLYLSAIHEAVSLGKIEVVNLPVEIGTAPSAEQVQRFAEIVSDSAKKPIYLHSQEGISRTSAMVSRWKQYVTRAERLATQNRSLNGNGKHVRNDQTEQLTNSPGFSSEGSENGTPLESDRTMEGETCDIDIETARHNLEITNSLPSEQSTEQGELHGTRTELQSNFRLESNPLKAQFPSCDVFSKKGMTDFFRSKKVYPKSVLNPRRRSNSLLVSRRKQSLSAEQNGAIDYEAAEFKVLKSSNGASFDNDYILSVASGITNGKPSNNGASTSVEDREMETSVVTVDPRTSDTSNSNGNAPLGSQKSAERNGSLYVEREKSDHVDGNMCASATGVVRLQSRRKAEMFLVRTDGFSCTREKVTESSLAFTHPSTQQQMLMWKSPPKTVLLLKKLGDELMEEAKEVASFLHHQEKMNVLVEPDVHDIFARIPGYGFVQTFYTQDTSDLHERVDFVACLGGDGVILHASNLFRTSVPPVVSFNLGSLGFLTSHNFEGFRQDLRAVIHGNNTLGVYITLRMRLRCEIFRNGKAMPGKVFDVLNEVVVDRGSNPYLSKIECYEHNHLITKVQGDGVIVATPTGSTAYSTAAGGSMVHPNVPCMLFTPICPHSLSFRPVILPDSARLELKIPDDARSNAWVSFDGKRRQQLSRGDSVQISMSQHPLPTVNKSDQTGDWFRSLIRCLNWNERLDQKAL</sequence>
<accession>Q53NI2</accession>
<accession>Q0IU37</accession>
<organism>
    <name type="scientific">Oryza sativa subsp. japonica</name>
    <name type="common">Rice</name>
    <dbReference type="NCBI Taxonomy" id="39947"/>
    <lineage>
        <taxon>Eukaryota</taxon>
        <taxon>Viridiplantae</taxon>
        <taxon>Streptophyta</taxon>
        <taxon>Embryophyta</taxon>
        <taxon>Tracheophyta</taxon>
        <taxon>Spermatophyta</taxon>
        <taxon>Magnoliopsida</taxon>
        <taxon>Liliopsida</taxon>
        <taxon>Poales</taxon>
        <taxon>Poaceae</taxon>
        <taxon>BOP clade</taxon>
        <taxon>Oryzoideae</taxon>
        <taxon>Oryzeae</taxon>
        <taxon>Oryzinae</taxon>
        <taxon>Oryza</taxon>
        <taxon>Oryza sativa</taxon>
    </lineage>
</organism>
<protein>
    <recommendedName>
        <fullName>Probable NAD kinase 2, chloroplastic</fullName>
        <ecNumber>2.7.1.23</ecNumber>
    </recommendedName>
</protein>
<name>NADK2_ORYSJ</name>
<keyword id="KW-0067">ATP-binding</keyword>
<keyword id="KW-0112">Calmodulin-binding</keyword>
<keyword id="KW-0150">Chloroplast</keyword>
<keyword id="KW-0418">Kinase</keyword>
<keyword id="KW-0520">NAD</keyword>
<keyword id="KW-0521">NADP</keyword>
<keyword id="KW-0547">Nucleotide-binding</keyword>
<keyword id="KW-0934">Plastid</keyword>
<keyword id="KW-1185">Reference proteome</keyword>
<keyword id="KW-0808">Transferase</keyword>
<keyword id="KW-0809">Transit peptide</keyword>
<feature type="transit peptide" description="Chloroplast" evidence="2">
    <location>
        <begin position="1"/>
        <end status="unknown"/>
    </location>
</feature>
<feature type="chain" id="PRO_0000233706" description="Probable NAD kinase 2, chloroplastic">
    <location>
        <begin status="unknown"/>
        <end position="981"/>
    </location>
</feature>
<feature type="region of interest" description="Calmodulin-binding" evidence="1">
    <location>
        <begin position="319"/>
        <end position="364"/>
    </location>
</feature>
<feature type="region of interest" description="Disordered" evidence="3">
    <location>
        <begin position="369"/>
        <end position="413"/>
    </location>
</feature>
<feature type="region of interest" description="Disordered" evidence="3">
    <location>
        <begin position="551"/>
        <end position="601"/>
    </location>
</feature>
<feature type="compositionally biased region" description="Polar residues" evidence="3">
    <location>
        <begin position="387"/>
        <end position="406"/>
    </location>
</feature>
<feature type="compositionally biased region" description="Polar residues" evidence="3">
    <location>
        <begin position="551"/>
        <end position="563"/>
    </location>
</feature>
<feature type="compositionally biased region" description="Polar residues" evidence="3">
    <location>
        <begin position="581"/>
        <end position="596"/>
    </location>
</feature>
<feature type="sequence conflict" description="In Ref. 5; AK065215." evidence="4" ref="5">
    <original>K</original>
    <variation>R</variation>
    <location>
        <position position="610"/>
    </location>
</feature>
<feature type="sequence conflict" description="In Ref. 5; AK065215." evidence="4" ref="5">
    <original>L</original>
    <variation>V</variation>
    <location>
        <position position="809"/>
    </location>
</feature>
<evidence type="ECO:0000250" key="1"/>
<evidence type="ECO:0000255" key="2"/>
<evidence type="ECO:0000256" key="3">
    <source>
        <dbReference type="SAM" id="MobiDB-lite"/>
    </source>
</evidence>
<evidence type="ECO:0000305" key="4"/>
<gene>
    <name type="ordered locus">Os11g0191400</name>
    <name type="ordered locus">LOC_Os11g08670</name>
</gene>
<comment type="function">
    <text evidence="1">Involved in chlorophyll synthesis and chloroplast protection against oxidative damage.</text>
</comment>
<comment type="catalytic activity">
    <reaction>
        <text>NAD(+) + ATP = ADP + NADP(+) + H(+)</text>
        <dbReference type="Rhea" id="RHEA:18629"/>
        <dbReference type="ChEBI" id="CHEBI:15378"/>
        <dbReference type="ChEBI" id="CHEBI:30616"/>
        <dbReference type="ChEBI" id="CHEBI:57540"/>
        <dbReference type="ChEBI" id="CHEBI:58349"/>
        <dbReference type="ChEBI" id="CHEBI:456216"/>
        <dbReference type="EC" id="2.7.1.23"/>
    </reaction>
</comment>
<comment type="subcellular location">
    <subcellularLocation>
        <location evidence="1">Plastid</location>
        <location evidence="1">Chloroplast</location>
    </subcellularLocation>
</comment>
<comment type="similarity">
    <text evidence="4">Belongs to the NAD kinase family.</text>
</comment>